<proteinExistence type="evidence at protein level"/>
<comment type="function">
    <text evidence="1">Catalyzes the transglycosylation of maltooligosaccharides, yielding maltooligosaccharides of various lengths and glucose. Maltose and glucose can be used as acceptors in the transfer reaction.</text>
</comment>
<comment type="catalytic activity">
    <reaction evidence="1">
        <text>Transfers a segment of a (1-&gt;4)-alpha-D-glucan to a new position in an acceptor, which may be glucose or a (1-&gt;4)-alpha-D-glucan.</text>
        <dbReference type="EC" id="2.4.1.25"/>
    </reaction>
</comment>
<comment type="activity regulation">
    <text>Inhibited by p-chloromercuribenzoic acid, monoiodoacetic acid, mercury and nickel ions.</text>
</comment>
<comment type="biophysicochemical properties">
    <kinetics>
        <Vmax evidence="1">13.0 umol/min/mg enzyme with maltose as substrate</Vmax>
        <Vmax evidence="1">26.0 umol/min/mg enzyme with maltotriose as substrate</Vmax>
    </kinetics>
    <temperatureDependence>
        <text evidence="1">Optimum temperature is 85-100 degrees Celsius.</text>
    </temperatureDependence>
</comment>
<comment type="subunit">
    <text evidence="1">homodimer.</text>
</comment>
<comment type="induction">
    <text evidence="1">Expressed constitutively.</text>
</comment>
<comment type="similarity">
    <text evidence="2">Belongs to the glycosyl hydrolase 57 family.</text>
</comment>
<feature type="chain" id="PRO_0000184577" description="4-alpha-glucanotransferase">
    <location>
        <begin position="1"/>
        <end position="659"/>
    </location>
</feature>
<feature type="active site" description="Nucleophile">
    <location>
        <position position="123"/>
    </location>
</feature>
<feature type="active site" description="Proton donor">
    <location>
        <position position="214"/>
    </location>
</feature>
<feature type="strand" evidence="4">
    <location>
        <begin position="4"/>
        <end position="12"/>
    </location>
</feature>
<feature type="helix" evidence="4">
    <location>
        <begin position="20"/>
        <end position="29"/>
    </location>
</feature>
<feature type="helix" evidence="4">
    <location>
        <begin position="31"/>
        <end position="38"/>
    </location>
</feature>
<feature type="strand" evidence="4">
    <location>
        <begin position="46"/>
        <end position="50"/>
    </location>
</feature>
<feature type="helix" evidence="4">
    <location>
        <begin position="52"/>
        <end position="61"/>
    </location>
</feature>
<feature type="helix" evidence="4">
    <location>
        <begin position="63"/>
        <end position="74"/>
    </location>
</feature>
<feature type="strand" evidence="4">
    <location>
        <begin position="78"/>
        <end position="82"/>
    </location>
</feature>
<feature type="helix" evidence="4">
    <location>
        <begin position="90"/>
        <end position="92"/>
    </location>
</feature>
<feature type="helix" evidence="4">
    <location>
        <begin position="95"/>
        <end position="111"/>
    </location>
</feature>
<feature type="strand" evidence="4">
    <location>
        <begin position="118"/>
        <end position="120"/>
    </location>
</feature>
<feature type="helix" evidence="4">
    <location>
        <begin position="122"/>
        <end position="124"/>
    </location>
</feature>
<feature type="helix" evidence="4">
    <location>
        <begin position="130"/>
        <end position="136"/>
    </location>
</feature>
<feature type="strand" evidence="4">
    <location>
        <begin position="141"/>
        <end position="145"/>
    </location>
</feature>
<feature type="helix" evidence="4">
    <location>
        <begin position="146"/>
        <end position="152"/>
    </location>
</feature>
<feature type="helix" evidence="4">
    <location>
        <begin position="156"/>
        <end position="158"/>
    </location>
</feature>
<feature type="strand" evidence="4">
    <location>
        <begin position="163"/>
        <end position="167"/>
    </location>
</feature>
<feature type="strand" evidence="4">
    <location>
        <begin position="170"/>
        <end position="177"/>
    </location>
</feature>
<feature type="helix" evidence="4">
    <location>
        <begin position="179"/>
        <end position="184"/>
    </location>
</feature>
<feature type="turn" evidence="4">
    <location>
        <begin position="185"/>
        <end position="187"/>
    </location>
</feature>
<feature type="helix" evidence="4">
    <location>
        <begin position="190"/>
        <end position="198"/>
    </location>
</feature>
<feature type="strand" evidence="4">
    <location>
        <begin position="208"/>
        <end position="214"/>
    </location>
</feature>
<feature type="helix" evidence="4">
    <location>
        <begin position="215"/>
        <end position="217"/>
    </location>
</feature>
<feature type="turn" evidence="4">
    <location>
        <begin position="218"/>
        <end position="220"/>
    </location>
</feature>
<feature type="helix" evidence="4">
    <location>
        <begin position="224"/>
        <end position="228"/>
    </location>
</feature>
<feature type="turn" evidence="4">
    <location>
        <begin position="229"/>
        <end position="231"/>
    </location>
</feature>
<feature type="helix" evidence="4">
    <location>
        <begin position="233"/>
        <end position="243"/>
    </location>
</feature>
<feature type="strand" evidence="4">
    <location>
        <begin position="247"/>
        <end position="249"/>
    </location>
</feature>
<feature type="helix" evidence="4">
    <location>
        <begin position="252"/>
        <end position="258"/>
    </location>
</feature>
<feature type="helix" evidence="4">
    <location>
        <begin position="274"/>
        <end position="278"/>
    </location>
</feature>
<feature type="helix" evidence="4">
    <location>
        <begin position="282"/>
        <end position="296"/>
    </location>
</feature>
<feature type="turn" evidence="4">
    <location>
        <begin position="297"/>
        <end position="299"/>
    </location>
</feature>
<feature type="turn" evidence="4">
    <location>
        <begin position="302"/>
        <end position="304"/>
    </location>
</feature>
<feature type="helix" evidence="4">
    <location>
        <begin position="305"/>
        <end position="307"/>
    </location>
</feature>
<feature type="helix" evidence="4">
    <location>
        <begin position="313"/>
        <end position="315"/>
    </location>
</feature>
<feature type="helix" evidence="4">
    <location>
        <begin position="316"/>
        <end position="319"/>
    </location>
</feature>
<feature type="helix" evidence="4">
    <location>
        <begin position="321"/>
        <end position="337"/>
    </location>
</feature>
<feature type="helix" evidence="4">
    <location>
        <begin position="341"/>
        <end position="350"/>
    </location>
</feature>
<feature type="helix" evidence="4">
    <location>
        <begin position="353"/>
        <end position="356"/>
    </location>
</feature>
<feature type="strand" evidence="4">
    <location>
        <begin position="359"/>
        <end position="361"/>
    </location>
</feature>
<feature type="helix" evidence="4">
    <location>
        <begin position="363"/>
        <end position="365"/>
    </location>
</feature>
<feature type="helix" evidence="4">
    <location>
        <begin position="367"/>
        <end position="381"/>
    </location>
</feature>
<feature type="strand" evidence="4">
    <location>
        <begin position="389"/>
        <end position="391"/>
    </location>
</feature>
<feature type="strand" evidence="4">
    <location>
        <begin position="393"/>
        <end position="398"/>
    </location>
</feature>
<feature type="strand" evidence="4">
    <location>
        <begin position="400"/>
        <end position="404"/>
    </location>
</feature>
<feature type="strand" evidence="4">
    <location>
        <begin position="406"/>
        <end position="412"/>
    </location>
</feature>
<feature type="turn" evidence="4">
    <location>
        <begin position="414"/>
        <end position="418"/>
    </location>
</feature>
<feature type="strand" evidence="4">
    <location>
        <begin position="420"/>
        <end position="425"/>
    </location>
</feature>
<feature type="turn" evidence="4">
    <location>
        <begin position="426"/>
        <end position="429"/>
    </location>
</feature>
<feature type="helix" evidence="3">
    <location>
        <begin position="442"/>
        <end position="444"/>
    </location>
</feature>
<feature type="helix" evidence="4">
    <location>
        <begin position="472"/>
        <end position="475"/>
    </location>
</feature>
<feature type="strand" evidence="4">
    <location>
        <begin position="487"/>
        <end position="493"/>
    </location>
</feature>
<feature type="helix" evidence="4">
    <location>
        <begin position="499"/>
        <end position="503"/>
    </location>
</feature>
<feature type="turn" evidence="5">
    <location>
        <begin position="504"/>
        <end position="506"/>
    </location>
</feature>
<feature type="strand" evidence="4">
    <location>
        <begin position="514"/>
        <end position="516"/>
    </location>
</feature>
<feature type="strand" evidence="4">
    <location>
        <begin position="519"/>
        <end position="523"/>
    </location>
</feature>
<feature type="strand" evidence="4">
    <location>
        <begin position="526"/>
        <end position="552"/>
    </location>
</feature>
<feature type="strand" evidence="4">
    <location>
        <begin position="555"/>
        <end position="566"/>
    </location>
</feature>
<feature type="strand" evidence="4">
    <location>
        <begin position="570"/>
        <end position="578"/>
    </location>
</feature>
<feature type="strand" evidence="4">
    <location>
        <begin position="588"/>
        <end position="599"/>
    </location>
</feature>
<feature type="turn" evidence="4">
    <location>
        <begin position="600"/>
        <end position="603"/>
    </location>
</feature>
<feature type="strand" evidence="4">
    <location>
        <begin position="604"/>
        <end position="627"/>
    </location>
</feature>
<feature type="strand" evidence="4">
    <location>
        <begin position="630"/>
        <end position="658"/>
    </location>
</feature>
<reference key="1">
    <citation type="journal article" date="1997" name="Eur. J. Biochem.">
        <title>4-alpha-glucanotransferase from the hyperthermophilic archaeon Thermococcus litoralis. Enzyme purification and characterization, and gene cloning, sequencing and expression in Escherichia coli.</title>
        <authorList>
            <person name="Jeon B.-S."/>
            <person name="Taguchi H."/>
            <person name="Sakai H."/>
            <person name="Ohshima T."/>
            <person name="Wakagi T."/>
            <person name="Matsuzawa H."/>
        </authorList>
    </citation>
    <scope>NUCLEOTIDE SEQUENCE [GENOMIC DNA]</scope>
    <scope>PROTEIN SEQUENCE OF 1-19 AND 427-437</scope>
    <scope>CHARACTERIZATION</scope>
    <source>
        <strain>ATCC 51850 / DSM 5473 / JCM 8560 / NS-C</strain>
    </source>
</reference>
<reference key="2">
    <citation type="journal article" date="2012" name="J. Bacteriol.">
        <title>Genome sequence of the model hyperthermophilic archaeon Thermococcus litoralis NS-C.</title>
        <authorList>
            <person name="Gardner A.F."/>
            <person name="Kumar S."/>
            <person name="Perler F.B."/>
        </authorList>
    </citation>
    <scope>NUCLEOTIDE SEQUENCE [LARGE SCALE GENOMIC DNA]</scope>
    <source>
        <strain>ATCC 51850 / DSM 5473 / JCM 8560 / NS-C</strain>
    </source>
</reference>
<reference key="3">
    <citation type="journal article" date="1999" name="J. Bacteriol.">
        <title>Maltose metabolism in the hyperthermophilic archaeon Thermococcus litoralis: purification and characterization of key enzymes.</title>
        <authorList>
            <person name="Xavier K.B."/>
            <person name="Peist R."/>
            <person name="Kossmann M."/>
            <person name="Boos W."/>
            <person name="Santos H."/>
        </authorList>
    </citation>
    <scope>PROTEIN SEQUENCE OF 1-35</scope>
    <scope>FUNCTION</scope>
    <scope>CATALYTIC ACTIVITY</scope>
    <scope>BIOPHYSICOCHEMICAL PROPERTIES</scope>
    <scope>SUBUNIT</scope>
    <scope>INDUCTION</scope>
    <source>
        <strain>ATCC 51850 / DSM 5473 / JCM 8560 / NS-C</strain>
    </source>
</reference>
<reference key="4">
    <citation type="journal article" date="2003" name="J. Biol. Chem.">
        <title>Crystal structures of 4-alpha-glucanotransferase from Thermococcus litoralis and its complex with an inhibitor.</title>
        <authorList>
            <person name="Imamura H."/>
            <person name="Fushinobu S."/>
            <person name="Yamamoto M."/>
            <person name="Kumasaka T."/>
            <person name="Jeon B.S."/>
            <person name="Wakagi T."/>
            <person name="Matsuzawa H."/>
        </authorList>
    </citation>
    <scope>X-RAY CRYSTALLOGRAPHY (2.8 ANGSTROMS)</scope>
</reference>
<keyword id="KW-0002">3D-structure</keyword>
<keyword id="KW-0119">Carbohydrate metabolism</keyword>
<keyword id="KW-0903">Direct protein sequencing</keyword>
<keyword id="KW-0328">Glycosyltransferase</keyword>
<keyword id="KW-0808">Transferase</keyword>
<protein>
    <recommendedName>
        <fullName>4-alpha-glucanotransferase</fullName>
        <ecNumber>2.4.1.25</ecNumber>
    </recommendedName>
    <alternativeName>
        <fullName>Amylomaltase</fullName>
    </alternativeName>
    <alternativeName>
        <fullName>Disproportionating enzyme</fullName>
        <shortName>D-enzyme</shortName>
    </alternativeName>
</protein>
<gene>
    <name type="primary">jgt</name>
    <name type="ORF">OCC_10078</name>
</gene>
<evidence type="ECO:0000269" key="1">
    <source>
    </source>
</evidence>
<evidence type="ECO:0000305" key="2"/>
<evidence type="ECO:0007829" key="3">
    <source>
        <dbReference type="PDB" id="1K1W"/>
    </source>
</evidence>
<evidence type="ECO:0007829" key="4">
    <source>
        <dbReference type="PDB" id="1K1X"/>
    </source>
</evidence>
<evidence type="ECO:0007829" key="5">
    <source>
        <dbReference type="PDB" id="1K1Y"/>
    </source>
</evidence>
<organism>
    <name type="scientific">Thermococcus litoralis (strain ATCC 51850 / DSM 5473 / JCM 8560 / NS-C)</name>
    <dbReference type="NCBI Taxonomy" id="523849"/>
    <lineage>
        <taxon>Archaea</taxon>
        <taxon>Methanobacteriati</taxon>
        <taxon>Methanobacteriota</taxon>
        <taxon>Thermococci</taxon>
        <taxon>Thermococcales</taxon>
        <taxon>Thermococcaceae</taxon>
        <taxon>Thermococcus</taxon>
    </lineage>
</organism>
<dbReference type="EC" id="2.4.1.25"/>
<dbReference type="EMBL" id="D88253">
    <property type="protein sequence ID" value="BAA22063.1"/>
    <property type="molecule type" value="Genomic_DNA"/>
</dbReference>
<dbReference type="EMBL" id="CP006670">
    <property type="protein sequence ID" value="EHR79231.1"/>
    <property type="molecule type" value="Genomic_DNA"/>
</dbReference>
<dbReference type="RefSeq" id="WP_004067291.1">
    <property type="nucleotide sequence ID" value="NC_022084.1"/>
</dbReference>
<dbReference type="PDB" id="1K1W">
    <property type="method" value="X-ray"/>
    <property type="resolution" value="2.80 A"/>
    <property type="chains" value="A=1-659"/>
</dbReference>
<dbReference type="PDB" id="1K1X">
    <property type="method" value="X-ray"/>
    <property type="resolution" value="2.40 A"/>
    <property type="chains" value="A/B=1-659"/>
</dbReference>
<dbReference type="PDB" id="1K1Y">
    <property type="method" value="X-ray"/>
    <property type="resolution" value="2.40 A"/>
    <property type="chains" value="A/B=1-659"/>
</dbReference>
<dbReference type="PDBsum" id="1K1W"/>
<dbReference type="PDBsum" id="1K1X"/>
<dbReference type="PDBsum" id="1K1Y"/>
<dbReference type="SMR" id="O32462"/>
<dbReference type="STRING" id="523849.OCC_10078"/>
<dbReference type="CAZy" id="GH57">
    <property type="family name" value="Glycoside Hydrolase Family 57"/>
</dbReference>
<dbReference type="PaxDb" id="523849-OCC_10078"/>
<dbReference type="GeneID" id="16548782"/>
<dbReference type="KEGG" id="tlt:OCC_10078"/>
<dbReference type="HOGENOM" id="CLU_026700_0_0_2"/>
<dbReference type="OrthoDB" id="18576at2157"/>
<dbReference type="BRENDA" id="2.4.1.25">
    <property type="organism ID" value="6302"/>
</dbReference>
<dbReference type="EvolutionaryTrace" id="O32462"/>
<dbReference type="PRO" id="PR:O32462"/>
<dbReference type="Proteomes" id="UP000015502">
    <property type="component" value="Chromosome"/>
</dbReference>
<dbReference type="GO" id="GO:0004134">
    <property type="term" value="F:4-alpha-glucanotransferase activity"/>
    <property type="evidence" value="ECO:0007669"/>
    <property type="project" value="UniProtKB-EC"/>
</dbReference>
<dbReference type="GO" id="GO:0030246">
    <property type="term" value="F:carbohydrate binding"/>
    <property type="evidence" value="ECO:0007669"/>
    <property type="project" value="InterPro"/>
</dbReference>
<dbReference type="GO" id="GO:0005975">
    <property type="term" value="P:carbohydrate metabolic process"/>
    <property type="evidence" value="ECO:0007669"/>
    <property type="project" value="InterPro"/>
</dbReference>
<dbReference type="CDD" id="cd10793">
    <property type="entry name" value="GH57N_TLGT_like"/>
    <property type="match status" value="1"/>
</dbReference>
<dbReference type="Gene3D" id="2.70.98.10">
    <property type="match status" value="1"/>
</dbReference>
<dbReference type="Gene3D" id="3.20.110.20">
    <property type="match status" value="1"/>
</dbReference>
<dbReference type="InterPro" id="IPR015179">
    <property type="entry name" value="A-amylase/a-glucTrfase_C"/>
</dbReference>
<dbReference type="InterPro" id="IPR015178">
    <property type="entry name" value="A-amylase/a-glucTrfase_central"/>
</dbReference>
<dbReference type="InterPro" id="IPR011013">
    <property type="entry name" value="Gal_mutarotase_sf_dom"/>
</dbReference>
<dbReference type="InterPro" id="IPR014718">
    <property type="entry name" value="GH-type_carb-bd"/>
</dbReference>
<dbReference type="InterPro" id="IPR052046">
    <property type="entry name" value="GH57_Enzymes"/>
</dbReference>
<dbReference type="InterPro" id="IPR011330">
    <property type="entry name" value="Glyco_hydro/deAcase_b/a-brl"/>
</dbReference>
<dbReference type="InterPro" id="IPR028995">
    <property type="entry name" value="Glyco_hydro_57/38_cen_sf"/>
</dbReference>
<dbReference type="InterPro" id="IPR004300">
    <property type="entry name" value="Glyco_hydro_57_N"/>
</dbReference>
<dbReference type="PANTHER" id="PTHR36306:SF1">
    <property type="entry name" value="ALPHA-AMYLASE-RELATED"/>
    <property type="match status" value="1"/>
</dbReference>
<dbReference type="PANTHER" id="PTHR36306">
    <property type="entry name" value="ALPHA-AMYLASE-RELATED-RELATED"/>
    <property type="match status" value="1"/>
</dbReference>
<dbReference type="Pfam" id="PF09094">
    <property type="entry name" value="AmyA-A_glucT_m"/>
    <property type="match status" value="1"/>
</dbReference>
<dbReference type="Pfam" id="PF09095">
    <property type="entry name" value="AmyA-gluTrfs_C"/>
    <property type="match status" value="1"/>
</dbReference>
<dbReference type="Pfam" id="PF03065">
    <property type="entry name" value="Glyco_hydro_57"/>
    <property type="match status" value="1"/>
</dbReference>
<dbReference type="SUPFAM" id="SSF88688">
    <property type="entry name" value="Families 57/38 glycoside transferase middle domain"/>
    <property type="match status" value="1"/>
</dbReference>
<dbReference type="SUPFAM" id="SSF74650">
    <property type="entry name" value="Galactose mutarotase-like"/>
    <property type="match status" value="1"/>
</dbReference>
<dbReference type="SUPFAM" id="SSF88713">
    <property type="entry name" value="Glycoside hydrolase/deacetylase"/>
    <property type="match status" value="1"/>
</dbReference>
<accession>O32462</accession>
<accession>H3ZLH6</accession>
<name>MALQ_THELN</name>
<sequence>MERINFIFGIHNHQPLGNFGWVFEEAYNRSYRPFMEILEEFPEMKVNVHFSGPLLEWIEENKPDYLDLLRSLIKRGQLEIVVAGFYEPVLAAIPKEDRLVQIEMLKDYARKLGYDAKGVWLTERVWQPELVKSLREAGIEYVVVDDYHFMSAGLSKEELFWPYYTEDGGEVITVFPIDEKLRYLIPFRPVKKTIEYLESLTSDDPSKVAVFHDDGEKFGVWPGTYEWVYEKGWLREFFDAITSNEKINLMTYSEYLSKFTPRGLVYLPIASYFEMSEWSLPAKQAKLFVEFVEQLKEEGKFEKYRVFVRGGIWKNFFFKYPESNFMHKRMLMVSKAVRDNPEARKYILKAQCNDAYWHGVFGGIYLPHLRRTVWENIIKAQRYLKPENKILDVDFDGRAEIMVENDGFIATIKPHYGGSIFELSSKRKAVNYNDVLPRRWEHYHEVPEATKPEKESEEGIASIHELGKQIPEEIRRELAYDWQLRAILQDHFIKPEETLDNYRLVKYHELGDFVNQPYEYEMIENGVKLWREGGVYAEEKIPARVEKKIELTEDGFIAKYRVLLEKPYKALFGVEINLAVHSVMEKPEEFEAKEFEVNDPYGIGKVRIELDKAAKVWKFPIKTLSQSEAGWDFIQQGVSYTMLFPIEKELEFTVRFREL</sequence>